<keyword id="KW-1003">Cell membrane</keyword>
<keyword id="KW-0325">Glycoprotein</keyword>
<keyword id="KW-0333">Golgi apparatus</keyword>
<keyword id="KW-0472">Membrane</keyword>
<keyword id="KW-1185">Reference proteome</keyword>
<keyword id="KW-0732">Signal</keyword>
<keyword id="KW-0812">Transmembrane</keyword>
<keyword id="KW-1133">Transmembrane helix</keyword>
<evidence type="ECO:0000250" key="1"/>
<evidence type="ECO:0000255" key="2"/>
<evidence type="ECO:0000256" key="3">
    <source>
        <dbReference type="SAM" id="MobiDB-lite"/>
    </source>
</evidence>
<evidence type="ECO:0000305" key="4"/>
<feature type="signal peptide" evidence="2">
    <location>
        <begin position="1"/>
        <end position="23"/>
    </location>
</feature>
<feature type="chain" id="PRO_0000251888" description="Uncharacterized protein C11orf24 homolog">
    <location>
        <begin position="24"/>
        <end position="392"/>
    </location>
</feature>
<feature type="topological domain" description="Extracellular" evidence="2">
    <location>
        <begin position="24"/>
        <end position="342"/>
    </location>
</feature>
<feature type="transmembrane region" description="Helical" evidence="2">
    <location>
        <begin position="343"/>
        <end position="363"/>
    </location>
</feature>
<feature type="topological domain" description="Cytoplasmic" evidence="2">
    <location>
        <begin position="364"/>
        <end position="392"/>
    </location>
</feature>
<feature type="region of interest" description="Disordered" evidence="3">
    <location>
        <begin position="83"/>
        <end position="154"/>
    </location>
</feature>
<feature type="region of interest" description="Disordered" evidence="3">
    <location>
        <begin position="167"/>
        <end position="320"/>
    </location>
</feature>
<feature type="compositionally biased region" description="Low complexity" evidence="3">
    <location>
        <begin position="86"/>
        <end position="97"/>
    </location>
</feature>
<feature type="compositionally biased region" description="Polar residues" evidence="3">
    <location>
        <begin position="107"/>
        <end position="127"/>
    </location>
</feature>
<feature type="compositionally biased region" description="Polar residues" evidence="3">
    <location>
        <begin position="170"/>
        <end position="249"/>
    </location>
</feature>
<feature type="compositionally biased region" description="Low complexity" evidence="3">
    <location>
        <begin position="265"/>
        <end position="277"/>
    </location>
</feature>
<feature type="compositionally biased region" description="Low complexity" evidence="3">
    <location>
        <begin position="284"/>
        <end position="309"/>
    </location>
</feature>
<feature type="glycosylation site" description="N-linked (GlcNAc...) asparagine" evidence="2">
    <location>
        <position position="77"/>
    </location>
</feature>
<feature type="glycosylation site" description="N-linked (GlcNAc...) asparagine" evidence="2">
    <location>
        <position position="172"/>
    </location>
</feature>
<feature type="sequence conflict" description="In Ref. 2; AAH19471." evidence="4" ref="2">
    <original>S</original>
    <variation>T</variation>
    <location>
        <position position="18"/>
    </location>
</feature>
<feature type="sequence conflict" description="In Ref. 2; AAH19471." evidence="4" ref="2">
    <original>V</original>
    <variation>A</variation>
    <location>
        <position position="112"/>
    </location>
</feature>
<reference key="1">
    <citation type="journal article" date="2005" name="Science">
        <title>The transcriptional landscape of the mammalian genome.</title>
        <authorList>
            <person name="Carninci P."/>
            <person name="Kasukawa T."/>
            <person name="Katayama S."/>
            <person name="Gough J."/>
            <person name="Frith M.C."/>
            <person name="Maeda N."/>
            <person name="Oyama R."/>
            <person name="Ravasi T."/>
            <person name="Lenhard B."/>
            <person name="Wells C."/>
            <person name="Kodzius R."/>
            <person name="Shimokawa K."/>
            <person name="Bajic V.B."/>
            <person name="Brenner S.E."/>
            <person name="Batalov S."/>
            <person name="Forrest A.R."/>
            <person name="Zavolan M."/>
            <person name="Davis M.J."/>
            <person name="Wilming L.G."/>
            <person name="Aidinis V."/>
            <person name="Allen J.E."/>
            <person name="Ambesi-Impiombato A."/>
            <person name="Apweiler R."/>
            <person name="Aturaliya R.N."/>
            <person name="Bailey T.L."/>
            <person name="Bansal M."/>
            <person name="Baxter L."/>
            <person name="Beisel K.W."/>
            <person name="Bersano T."/>
            <person name="Bono H."/>
            <person name="Chalk A.M."/>
            <person name="Chiu K.P."/>
            <person name="Choudhary V."/>
            <person name="Christoffels A."/>
            <person name="Clutterbuck D.R."/>
            <person name="Crowe M.L."/>
            <person name="Dalla E."/>
            <person name="Dalrymple B.P."/>
            <person name="de Bono B."/>
            <person name="Della Gatta G."/>
            <person name="di Bernardo D."/>
            <person name="Down T."/>
            <person name="Engstrom P."/>
            <person name="Fagiolini M."/>
            <person name="Faulkner G."/>
            <person name="Fletcher C.F."/>
            <person name="Fukushima T."/>
            <person name="Furuno M."/>
            <person name="Futaki S."/>
            <person name="Gariboldi M."/>
            <person name="Georgii-Hemming P."/>
            <person name="Gingeras T.R."/>
            <person name="Gojobori T."/>
            <person name="Green R.E."/>
            <person name="Gustincich S."/>
            <person name="Harbers M."/>
            <person name="Hayashi Y."/>
            <person name="Hensch T.K."/>
            <person name="Hirokawa N."/>
            <person name="Hill D."/>
            <person name="Huminiecki L."/>
            <person name="Iacono M."/>
            <person name="Ikeo K."/>
            <person name="Iwama A."/>
            <person name="Ishikawa T."/>
            <person name="Jakt M."/>
            <person name="Kanapin A."/>
            <person name="Katoh M."/>
            <person name="Kawasawa Y."/>
            <person name="Kelso J."/>
            <person name="Kitamura H."/>
            <person name="Kitano H."/>
            <person name="Kollias G."/>
            <person name="Krishnan S.P."/>
            <person name="Kruger A."/>
            <person name="Kummerfeld S.K."/>
            <person name="Kurochkin I.V."/>
            <person name="Lareau L.F."/>
            <person name="Lazarevic D."/>
            <person name="Lipovich L."/>
            <person name="Liu J."/>
            <person name="Liuni S."/>
            <person name="McWilliam S."/>
            <person name="Madan Babu M."/>
            <person name="Madera M."/>
            <person name="Marchionni L."/>
            <person name="Matsuda H."/>
            <person name="Matsuzawa S."/>
            <person name="Miki H."/>
            <person name="Mignone F."/>
            <person name="Miyake S."/>
            <person name="Morris K."/>
            <person name="Mottagui-Tabar S."/>
            <person name="Mulder N."/>
            <person name="Nakano N."/>
            <person name="Nakauchi H."/>
            <person name="Ng P."/>
            <person name="Nilsson R."/>
            <person name="Nishiguchi S."/>
            <person name="Nishikawa S."/>
            <person name="Nori F."/>
            <person name="Ohara O."/>
            <person name="Okazaki Y."/>
            <person name="Orlando V."/>
            <person name="Pang K.C."/>
            <person name="Pavan W.J."/>
            <person name="Pavesi G."/>
            <person name="Pesole G."/>
            <person name="Petrovsky N."/>
            <person name="Piazza S."/>
            <person name="Reed J."/>
            <person name="Reid J.F."/>
            <person name="Ring B.Z."/>
            <person name="Ringwald M."/>
            <person name="Rost B."/>
            <person name="Ruan Y."/>
            <person name="Salzberg S.L."/>
            <person name="Sandelin A."/>
            <person name="Schneider C."/>
            <person name="Schoenbach C."/>
            <person name="Sekiguchi K."/>
            <person name="Semple C.A."/>
            <person name="Seno S."/>
            <person name="Sessa L."/>
            <person name="Sheng Y."/>
            <person name="Shibata Y."/>
            <person name="Shimada H."/>
            <person name="Shimada K."/>
            <person name="Silva D."/>
            <person name="Sinclair B."/>
            <person name="Sperling S."/>
            <person name="Stupka E."/>
            <person name="Sugiura K."/>
            <person name="Sultana R."/>
            <person name="Takenaka Y."/>
            <person name="Taki K."/>
            <person name="Tammoja K."/>
            <person name="Tan S.L."/>
            <person name="Tang S."/>
            <person name="Taylor M.S."/>
            <person name="Tegner J."/>
            <person name="Teichmann S.A."/>
            <person name="Ueda H.R."/>
            <person name="van Nimwegen E."/>
            <person name="Verardo R."/>
            <person name="Wei C.L."/>
            <person name="Yagi K."/>
            <person name="Yamanishi H."/>
            <person name="Zabarovsky E."/>
            <person name="Zhu S."/>
            <person name="Zimmer A."/>
            <person name="Hide W."/>
            <person name="Bult C."/>
            <person name="Grimmond S.M."/>
            <person name="Teasdale R.D."/>
            <person name="Liu E.T."/>
            <person name="Brusic V."/>
            <person name="Quackenbush J."/>
            <person name="Wahlestedt C."/>
            <person name="Mattick J.S."/>
            <person name="Hume D.A."/>
            <person name="Kai C."/>
            <person name="Sasaki D."/>
            <person name="Tomaru Y."/>
            <person name="Fukuda S."/>
            <person name="Kanamori-Katayama M."/>
            <person name="Suzuki M."/>
            <person name="Aoki J."/>
            <person name="Arakawa T."/>
            <person name="Iida J."/>
            <person name="Imamura K."/>
            <person name="Itoh M."/>
            <person name="Kato T."/>
            <person name="Kawaji H."/>
            <person name="Kawagashira N."/>
            <person name="Kawashima T."/>
            <person name="Kojima M."/>
            <person name="Kondo S."/>
            <person name="Konno H."/>
            <person name="Nakano K."/>
            <person name="Ninomiya N."/>
            <person name="Nishio T."/>
            <person name="Okada M."/>
            <person name="Plessy C."/>
            <person name="Shibata K."/>
            <person name="Shiraki T."/>
            <person name="Suzuki S."/>
            <person name="Tagami M."/>
            <person name="Waki K."/>
            <person name="Watahiki A."/>
            <person name="Okamura-Oho Y."/>
            <person name="Suzuki H."/>
            <person name="Kawai J."/>
            <person name="Hayashizaki Y."/>
        </authorList>
    </citation>
    <scope>NUCLEOTIDE SEQUENCE [LARGE SCALE MRNA]</scope>
    <source>
        <strain>C57BL/6J</strain>
        <strain>NOD</strain>
        <tissue>Dendritic cell</tissue>
        <tissue>Pancreas</tissue>
    </source>
</reference>
<reference key="2">
    <citation type="journal article" date="2004" name="Genome Res.">
        <title>The status, quality, and expansion of the NIH full-length cDNA project: the Mammalian Gene Collection (MGC).</title>
        <authorList>
            <consortium name="The MGC Project Team"/>
        </authorList>
    </citation>
    <scope>NUCLEOTIDE SEQUENCE [LARGE SCALE MRNA]</scope>
    <source>
        <strain>FVB/N</strain>
        <tissue>Liver</tissue>
    </source>
</reference>
<dbReference type="EMBL" id="AK007868">
    <property type="protein sequence ID" value="BAB25319.1"/>
    <property type="molecule type" value="mRNA"/>
</dbReference>
<dbReference type="EMBL" id="AK154828">
    <property type="protein sequence ID" value="BAE32858.1"/>
    <property type="molecule type" value="mRNA"/>
</dbReference>
<dbReference type="EMBL" id="BC019471">
    <property type="protein sequence ID" value="AAH19471.1"/>
    <property type="molecule type" value="mRNA"/>
</dbReference>
<dbReference type="CCDS" id="CCDS50342.1"/>
<dbReference type="RefSeq" id="NP_001345185.1">
    <property type="nucleotide sequence ID" value="NM_001358256.2"/>
</dbReference>
<dbReference type="RefSeq" id="NP_001345186.1">
    <property type="nucleotide sequence ID" value="NM_001358257.2"/>
</dbReference>
<dbReference type="RefSeq" id="NP_001345187.1">
    <property type="nucleotide sequence ID" value="NM_001358258.2"/>
</dbReference>
<dbReference type="RefSeq" id="NP_082353.1">
    <property type="nucleotide sequence ID" value="NM_028077.4"/>
</dbReference>
<dbReference type="RefSeq" id="XP_006531903.1">
    <property type="nucleotide sequence ID" value="XM_006531840.1"/>
</dbReference>
<dbReference type="RefSeq" id="XP_006531904.1">
    <property type="nucleotide sequence ID" value="XM_006531841.2"/>
</dbReference>
<dbReference type="SMR" id="Q9D8N1"/>
<dbReference type="BioGRID" id="215122">
    <property type="interactions" value="3"/>
</dbReference>
<dbReference type="FunCoup" id="Q9D8N1">
    <property type="interactions" value="610"/>
</dbReference>
<dbReference type="IntAct" id="Q9D8N1">
    <property type="interactions" value="4"/>
</dbReference>
<dbReference type="STRING" id="10090.ENSMUSP00000158133"/>
<dbReference type="GlyConnect" id="2811">
    <property type="glycosylation" value="1 N-Linked glycan (1 site)"/>
</dbReference>
<dbReference type="GlyGen" id="Q9D8N1">
    <property type="glycosylation" value="7 sites, 3 N-linked glycans (5 sites)"/>
</dbReference>
<dbReference type="iPTMnet" id="Q9D8N1"/>
<dbReference type="PhosphoSitePlus" id="Q9D8N1"/>
<dbReference type="PaxDb" id="10090-ENSMUSP00000047063"/>
<dbReference type="Antibodypedia" id="2629">
    <property type="antibodies" value="66 antibodies from 16 providers"/>
</dbReference>
<dbReference type="DNASU" id="72056"/>
<dbReference type="Ensembl" id="ENSMUST00000039048.2">
    <property type="protein sequence ID" value="ENSMUSP00000047063.2"/>
    <property type="gene ID" value="ENSMUSG00000035372.3"/>
</dbReference>
<dbReference type="Ensembl" id="ENSMUST00000235295.2">
    <property type="protein sequence ID" value="ENSMUSP00000157453.2"/>
    <property type="gene ID" value="ENSMUSG00000035372.3"/>
</dbReference>
<dbReference type="Ensembl" id="ENSMUST00000235837.2">
    <property type="protein sequence ID" value="ENSMUSP00000158554.2"/>
    <property type="gene ID" value="ENSMUSG00000035372.3"/>
</dbReference>
<dbReference type="Ensembl" id="ENSMUST00000237955.2">
    <property type="protein sequence ID" value="ENSMUSP00000158133.2"/>
    <property type="gene ID" value="ENSMUSG00000035372.3"/>
</dbReference>
<dbReference type="GeneID" id="72056"/>
<dbReference type="KEGG" id="mmu:72056"/>
<dbReference type="UCSC" id="uc008fwt.1">
    <property type="organism name" value="mouse"/>
</dbReference>
<dbReference type="AGR" id="MGI:1919306"/>
<dbReference type="MGI" id="MGI:1919306">
    <property type="gene designation" value="1810055G02Rik"/>
</dbReference>
<dbReference type="VEuPathDB" id="HostDB:ENSMUSG00000035372"/>
<dbReference type="eggNOG" id="ENOG502RZBP">
    <property type="taxonomic scope" value="Eukaryota"/>
</dbReference>
<dbReference type="GeneTree" id="ENSGT00940000153377"/>
<dbReference type="HOGENOM" id="CLU_056955_0_0_1"/>
<dbReference type="InParanoid" id="Q9D8N1"/>
<dbReference type="OMA" id="PEMEAMS"/>
<dbReference type="OrthoDB" id="10071013at2759"/>
<dbReference type="PhylomeDB" id="Q9D8N1"/>
<dbReference type="TreeFam" id="TF336966"/>
<dbReference type="BioGRID-ORCS" id="72056">
    <property type="hits" value="2 hits in 77 CRISPR screens"/>
</dbReference>
<dbReference type="PRO" id="PR:Q9D8N1"/>
<dbReference type="Proteomes" id="UP000000589">
    <property type="component" value="Chromosome 19"/>
</dbReference>
<dbReference type="RNAct" id="Q9D8N1">
    <property type="molecule type" value="protein"/>
</dbReference>
<dbReference type="Bgee" id="ENSMUSG00000035372">
    <property type="expression patterns" value="Expressed in epithelium of small intestine and 269 other cell types or tissues"/>
</dbReference>
<dbReference type="ExpressionAtlas" id="Q9D8N1">
    <property type="expression patterns" value="baseline and differential"/>
</dbReference>
<dbReference type="GO" id="GO:0005794">
    <property type="term" value="C:Golgi apparatus"/>
    <property type="evidence" value="ECO:0007669"/>
    <property type="project" value="UniProtKB-SubCell"/>
</dbReference>
<dbReference type="GO" id="GO:0005886">
    <property type="term" value="C:plasma membrane"/>
    <property type="evidence" value="ECO:0007669"/>
    <property type="project" value="UniProtKB-SubCell"/>
</dbReference>
<dbReference type="InterPro" id="IPR041056">
    <property type="entry name" value="DUF5585"/>
</dbReference>
<dbReference type="InterPro" id="IPR052660">
    <property type="entry name" value="Erythrocyte_Invasion_ImmMod"/>
</dbReference>
<dbReference type="PANTHER" id="PTHR16021:SF9">
    <property type="entry name" value="CHROMOSOME 11 OPEN READING FRAME 24"/>
    <property type="match status" value="1"/>
</dbReference>
<dbReference type="PANTHER" id="PTHR16021">
    <property type="entry name" value="MANSC DOMAIN CONTAINING PROTEIN 1"/>
    <property type="match status" value="1"/>
</dbReference>
<dbReference type="Pfam" id="PF17823">
    <property type="entry name" value="DUF5585"/>
    <property type="match status" value="2"/>
</dbReference>
<comment type="subcellular location">
    <subcellularLocation>
        <location evidence="1">Cell membrane</location>
        <topology evidence="1">Single-pass type I membrane protein</topology>
    </subcellularLocation>
    <subcellularLocation>
        <location evidence="1">Golgi apparatus</location>
        <location evidence="1">trans-Golgi network membrane</location>
        <topology evidence="1">Single-pass type I membrane protein</topology>
    </subcellularLocation>
    <text evidence="1">Cycles to the plasma membrane via endosomes in a pH sensitive manner. Associated with Rab6-positive vesicles (By similarity).</text>
</comment>
<name>CK024_MOUSE</name>
<sequence>MWTALVLVWISSVLLPRSHMMSAEPRNIVTNKWPKAVNQSMLRDTVPRTDNTFTERTAIVPPAPVTLTTETWAATLNSTRVTAEVTTHGTNTSTPTTREGTTDRVTSRTLAVPTSSGPSSAEQTRPTTIAGLPSLSTPHAEVPRTNASVSPRTAMAATVAPHTATLAAGTVNTSDPHTRTPSPAKSTPTDTSSKNPIPTSGAQIQGTTVQLTTDQPVHSTAGRSALSPSNATLEPTTTQVQTKEPSASTVPARATSLSPDVDVISPTTQPSPTLPTQGTGGPGTLLTTEQVGTKTTSGTASAGPTSRSSGDIKVPTTDSCQPSTQGQYLVTIDALTPSLVNKMLLLVVLLVGVTLFIAVLVMFALQAYESYKKKDYTQVDYLINGMYADSEM</sequence>
<protein>
    <recommendedName>
        <fullName>Uncharacterized protein C11orf24 homolog</fullName>
    </recommendedName>
</protein>
<organism>
    <name type="scientific">Mus musculus</name>
    <name type="common">Mouse</name>
    <dbReference type="NCBI Taxonomy" id="10090"/>
    <lineage>
        <taxon>Eukaryota</taxon>
        <taxon>Metazoa</taxon>
        <taxon>Chordata</taxon>
        <taxon>Craniata</taxon>
        <taxon>Vertebrata</taxon>
        <taxon>Euteleostomi</taxon>
        <taxon>Mammalia</taxon>
        <taxon>Eutheria</taxon>
        <taxon>Euarchontoglires</taxon>
        <taxon>Glires</taxon>
        <taxon>Rodentia</taxon>
        <taxon>Myomorpha</taxon>
        <taxon>Muroidea</taxon>
        <taxon>Muridae</taxon>
        <taxon>Murinae</taxon>
        <taxon>Mus</taxon>
        <taxon>Mus</taxon>
    </lineage>
</organism>
<accession>Q9D8N1</accession>
<accession>Q8VCP2</accession>
<proteinExistence type="evidence at transcript level"/>